<reference key="1">
    <citation type="journal article" date="2007" name="Nat. Biotechnol.">
        <title>Complete genome sequence of the myxobacterium Sorangium cellulosum.</title>
        <authorList>
            <person name="Schneiker S."/>
            <person name="Perlova O."/>
            <person name="Kaiser O."/>
            <person name="Gerth K."/>
            <person name="Alici A."/>
            <person name="Altmeyer M.O."/>
            <person name="Bartels D."/>
            <person name="Bekel T."/>
            <person name="Beyer S."/>
            <person name="Bode E."/>
            <person name="Bode H.B."/>
            <person name="Bolten C.J."/>
            <person name="Choudhuri J.V."/>
            <person name="Doss S."/>
            <person name="Elnakady Y.A."/>
            <person name="Frank B."/>
            <person name="Gaigalat L."/>
            <person name="Goesmann A."/>
            <person name="Groeger C."/>
            <person name="Gross F."/>
            <person name="Jelsbak L."/>
            <person name="Jelsbak L."/>
            <person name="Kalinowski J."/>
            <person name="Kegler C."/>
            <person name="Knauber T."/>
            <person name="Konietzny S."/>
            <person name="Kopp M."/>
            <person name="Krause L."/>
            <person name="Krug D."/>
            <person name="Linke B."/>
            <person name="Mahmud T."/>
            <person name="Martinez-Arias R."/>
            <person name="McHardy A.C."/>
            <person name="Merai M."/>
            <person name="Meyer F."/>
            <person name="Mormann S."/>
            <person name="Munoz-Dorado J."/>
            <person name="Perez J."/>
            <person name="Pradella S."/>
            <person name="Rachid S."/>
            <person name="Raddatz G."/>
            <person name="Rosenau F."/>
            <person name="Rueckert C."/>
            <person name="Sasse F."/>
            <person name="Scharfe M."/>
            <person name="Schuster S.C."/>
            <person name="Suen G."/>
            <person name="Treuner-Lange A."/>
            <person name="Velicer G.J."/>
            <person name="Vorholter F.-J."/>
            <person name="Weissman K.J."/>
            <person name="Welch R.D."/>
            <person name="Wenzel S.C."/>
            <person name="Whitworth D.E."/>
            <person name="Wilhelm S."/>
            <person name="Wittmann C."/>
            <person name="Bloecker H."/>
            <person name="Puehler A."/>
            <person name="Mueller R."/>
        </authorList>
    </citation>
    <scope>NUCLEOTIDE SEQUENCE [LARGE SCALE GENOMIC DNA]</scope>
    <source>
        <strain>So ce56</strain>
    </source>
</reference>
<dbReference type="EC" id="2.5.1.141" evidence="1"/>
<dbReference type="EMBL" id="AM746676">
    <property type="protein sequence ID" value="CAN93057.1"/>
    <property type="status" value="ALT_INIT"/>
    <property type="molecule type" value="Genomic_DNA"/>
</dbReference>
<dbReference type="SMR" id="A9GEU3"/>
<dbReference type="STRING" id="448385.sce2898"/>
<dbReference type="KEGG" id="scl:sce2898"/>
<dbReference type="eggNOG" id="COG0109">
    <property type="taxonomic scope" value="Bacteria"/>
</dbReference>
<dbReference type="HOGENOM" id="CLU_029631_0_0_7"/>
<dbReference type="UniPathway" id="UPA00834">
    <property type="reaction ID" value="UER00712"/>
</dbReference>
<dbReference type="Proteomes" id="UP000002139">
    <property type="component" value="Chromosome"/>
</dbReference>
<dbReference type="GO" id="GO:0005886">
    <property type="term" value="C:plasma membrane"/>
    <property type="evidence" value="ECO:0007669"/>
    <property type="project" value="UniProtKB-SubCell"/>
</dbReference>
<dbReference type="GO" id="GO:0008495">
    <property type="term" value="F:protoheme IX farnesyltransferase activity"/>
    <property type="evidence" value="ECO:0007669"/>
    <property type="project" value="UniProtKB-UniRule"/>
</dbReference>
<dbReference type="GO" id="GO:0048034">
    <property type="term" value="P:heme O biosynthetic process"/>
    <property type="evidence" value="ECO:0007669"/>
    <property type="project" value="UniProtKB-UniRule"/>
</dbReference>
<dbReference type="CDD" id="cd13957">
    <property type="entry name" value="PT_UbiA_Cox10"/>
    <property type="match status" value="1"/>
</dbReference>
<dbReference type="Gene3D" id="1.10.357.140">
    <property type="entry name" value="UbiA prenyltransferase"/>
    <property type="match status" value="1"/>
</dbReference>
<dbReference type="HAMAP" id="MF_00154">
    <property type="entry name" value="CyoE_CtaB"/>
    <property type="match status" value="1"/>
</dbReference>
<dbReference type="InterPro" id="IPR006369">
    <property type="entry name" value="Protohaem_IX_farnesylTrfase"/>
</dbReference>
<dbReference type="InterPro" id="IPR000537">
    <property type="entry name" value="UbiA_prenyltransferase"/>
</dbReference>
<dbReference type="InterPro" id="IPR030470">
    <property type="entry name" value="UbiA_prenylTrfase_CS"/>
</dbReference>
<dbReference type="InterPro" id="IPR044878">
    <property type="entry name" value="UbiA_sf"/>
</dbReference>
<dbReference type="NCBIfam" id="TIGR01473">
    <property type="entry name" value="cyoE_ctaB"/>
    <property type="match status" value="1"/>
</dbReference>
<dbReference type="PANTHER" id="PTHR43448">
    <property type="entry name" value="PROTOHEME IX FARNESYLTRANSFERASE, MITOCHONDRIAL"/>
    <property type="match status" value="1"/>
</dbReference>
<dbReference type="PANTHER" id="PTHR43448:SF2">
    <property type="entry name" value="PROTOHEME IX FARNESYLTRANSFERASE, MITOCHONDRIAL"/>
    <property type="match status" value="1"/>
</dbReference>
<dbReference type="Pfam" id="PF01040">
    <property type="entry name" value="UbiA"/>
    <property type="match status" value="1"/>
</dbReference>
<dbReference type="PROSITE" id="PS00943">
    <property type="entry name" value="UBIA"/>
    <property type="match status" value="1"/>
</dbReference>
<organism>
    <name type="scientific">Sorangium cellulosum (strain So ce56)</name>
    <name type="common">Polyangium cellulosum (strain So ce56)</name>
    <dbReference type="NCBI Taxonomy" id="448385"/>
    <lineage>
        <taxon>Bacteria</taxon>
        <taxon>Pseudomonadati</taxon>
        <taxon>Myxococcota</taxon>
        <taxon>Polyangia</taxon>
        <taxon>Polyangiales</taxon>
        <taxon>Polyangiaceae</taxon>
        <taxon>Sorangium</taxon>
    </lineage>
</organism>
<evidence type="ECO:0000255" key="1">
    <source>
        <dbReference type="HAMAP-Rule" id="MF_00154"/>
    </source>
</evidence>
<evidence type="ECO:0000305" key="2"/>
<comment type="function">
    <text evidence="1">Converts heme B (protoheme IX) to heme O by substitution of the vinyl group on carbon 2 of heme B porphyrin ring with a hydroxyethyl farnesyl side group.</text>
</comment>
<comment type="catalytic activity">
    <reaction evidence="1">
        <text>heme b + (2E,6E)-farnesyl diphosphate + H2O = Fe(II)-heme o + diphosphate</text>
        <dbReference type="Rhea" id="RHEA:28070"/>
        <dbReference type="ChEBI" id="CHEBI:15377"/>
        <dbReference type="ChEBI" id="CHEBI:33019"/>
        <dbReference type="ChEBI" id="CHEBI:60344"/>
        <dbReference type="ChEBI" id="CHEBI:60530"/>
        <dbReference type="ChEBI" id="CHEBI:175763"/>
        <dbReference type="EC" id="2.5.1.141"/>
    </reaction>
</comment>
<comment type="pathway">
    <text evidence="1">Porphyrin-containing compound metabolism; heme O biosynthesis; heme O from protoheme: step 1/1.</text>
</comment>
<comment type="subcellular location">
    <subcellularLocation>
        <location evidence="1">Cell inner membrane</location>
        <topology evidence="1">Multi-pass membrane protein</topology>
    </subcellularLocation>
</comment>
<comment type="miscellaneous">
    <text evidence="1">Carbon 2 of the heme B porphyrin ring is defined according to the Fischer nomenclature.</text>
</comment>
<comment type="similarity">
    <text evidence="1">Belongs to the UbiA prenyltransferase family. Protoheme IX farnesyltransferase subfamily.</text>
</comment>
<comment type="sequence caution" evidence="2">
    <conflict type="erroneous initiation">
        <sequence resource="EMBL-CDS" id="CAN93057"/>
    </conflict>
</comment>
<feature type="chain" id="PRO_0000346072" description="Protoheme IX farnesyltransferase">
    <location>
        <begin position="1"/>
        <end position="280"/>
    </location>
</feature>
<feature type="transmembrane region" description="Helical" evidence="1">
    <location>
        <begin position="2"/>
        <end position="21"/>
    </location>
</feature>
<feature type="transmembrane region" description="Helical" evidence="1">
    <location>
        <begin position="30"/>
        <end position="50"/>
    </location>
</feature>
<feature type="transmembrane region" description="Helical" evidence="1">
    <location>
        <begin position="83"/>
        <end position="103"/>
    </location>
</feature>
<feature type="transmembrane region" description="Helical" evidence="1">
    <location>
        <begin position="105"/>
        <end position="125"/>
    </location>
</feature>
<feature type="transmembrane region" description="Helical" evidence="1">
    <location>
        <begin position="131"/>
        <end position="151"/>
    </location>
</feature>
<feature type="transmembrane region" description="Helical" evidence="1">
    <location>
        <begin position="160"/>
        <end position="180"/>
    </location>
</feature>
<feature type="transmembrane region" description="Helical" evidence="1">
    <location>
        <begin position="206"/>
        <end position="226"/>
    </location>
</feature>
<feature type="transmembrane region" description="Helical" evidence="1">
    <location>
        <begin position="229"/>
        <end position="249"/>
    </location>
</feature>
<feature type="transmembrane region" description="Helical" evidence="1">
    <location>
        <begin position="260"/>
        <end position="280"/>
    </location>
</feature>
<gene>
    <name evidence="1" type="primary">ctaB</name>
    <name type="ordered locus">sce2898</name>
</gene>
<accession>A9GEU3</accession>
<protein>
    <recommendedName>
        <fullName evidence="1">Protoheme IX farnesyltransferase</fullName>
        <ecNumber evidence="1">2.5.1.141</ecNumber>
    </recommendedName>
    <alternativeName>
        <fullName evidence="1">Heme B farnesyltransferase</fullName>
    </alternativeName>
    <alternativeName>
        <fullName evidence="1">Heme O synthase</fullName>
    </alternativeName>
</protein>
<keyword id="KW-0997">Cell inner membrane</keyword>
<keyword id="KW-1003">Cell membrane</keyword>
<keyword id="KW-0350">Heme biosynthesis</keyword>
<keyword id="KW-0472">Membrane</keyword>
<keyword id="KW-1185">Reference proteome</keyword>
<keyword id="KW-0808">Transferase</keyword>
<keyword id="KW-0812">Transmembrane</keyword>
<keyword id="KW-1133">Transmembrane helix</keyword>
<sequence length="280" mass="29713">MVVATMLGGMWVASRYLRAGLAGDAAIERAAVPPAQLALALLGTVLVVSGANALNMYIERDTDLLMERTRSRPLPARRLSPELALWFGIALSAASIPVLLVGVNATTGVLAAAALLSYVLVYTPLKRRTTLSLPIGAIPGAIPPLLGWTSVTGQIDAPGFLLFAVMFLWQIPHFLAISLFRQDEYQRAGLKVLPLEKGDLTTRRHIVGYLALLVLSSVLFVPLGVAGPVYLGAAILLGGAFFGLGVYGLRAGTGARWARQVFFASMVYLVLLFAALMIGA</sequence>
<proteinExistence type="inferred from homology"/>
<name>COXX_SORC5</name>